<protein>
    <recommendedName>
        <fullName evidence="1">Protein hedgehog</fullName>
        <ecNumber evidence="3">3.1.-.-</ecNumber>
    </recommendedName>
    <component>
        <recommendedName>
            <fullName evidence="1">Protein hedgehog N-product</fullName>
        </recommendedName>
    </component>
</protein>
<proteinExistence type="inferred from homology"/>
<dbReference type="EC" id="3.1.-.-" evidence="3"/>
<dbReference type="EMBL" id="CM000160">
    <property type="protein sequence ID" value="EDW98104.1"/>
    <property type="molecule type" value="Genomic_DNA"/>
</dbReference>
<dbReference type="BMRB" id="B4PN49"/>
<dbReference type="SMR" id="B4PN49"/>
<dbReference type="MEROPS" id="C46.001"/>
<dbReference type="EnsemblMetazoa" id="FBtr0270498">
    <property type="protein sequence ID" value="FBpp0268990"/>
    <property type="gene ID" value="FBgn0241122"/>
</dbReference>
<dbReference type="EnsemblMetazoa" id="XM_002098356.4">
    <property type="protein sequence ID" value="XP_002098392.1"/>
    <property type="gene ID" value="LOC6537851"/>
</dbReference>
<dbReference type="GeneID" id="6537851"/>
<dbReference type="KEGG" id="dya:Dyak_GE23980"/>
<dbReference type="CTD" id="42737"/>
<dbReference type="eggNOG" id="KOG3638">
    <property type="taxonomic scope" value="Eukaryota"/>
</dbReference>
<dbReference type="HOGENOM" id="CLU_034686_0_0_1"/>
<dbReference type="OMA" id="HWVSSLL"/>
<dbReference type="OrthoDB" id="5212at2759"/>
<dbReference type="PhylomeDB" id="B4PN49"/>
<dbReference type="Proteomes" id="UP000002282">
    <property type="component" value="Chromosome 3R"/>
</dbReference>
<dbReference type="GO" id="GO:0030139">
    <property type="term" value="C:endocytic vesicle"/>
    <property type="evidence" value="ECO:0007669"/>
    <property type="project" value="EnsemblMetazoa"/>
</dbReference>
<dbReference type="GO" id="GO:0005768">
    <property type="term" value="C:endosome"/>
    <property type="evidence" value="ECO:0007669"/>
    <property type="project" value="EnsemblMetazoa"/>
</dbReference>
<dbReference type="GO" id="GO:0005615">
    <property type="term" value="C:extracellular space"/>
    <property type="evidence" value="ECO:0007669"/>
    <property type="project" value="EnsemblMetazoa"/>
</dbReference>
<dbReference type="GO" id="GO:0005634">
    <property type="term" value="C:nucleus"/>
    <property type="evidence" value="ECO:0007669"/>
    <property type="project" value="UniProtKB-SubCell"/>
</dbReference>
<dbReference type="GO" id="GO:0005886">
    <property type="term" value="C:plasma membrane"/>
    <property type="evidence" value="ECO:0007669"/>
    <property type="project" value="UniProtKB-SubCell"/>
</dbReference>
<dbReference type="GO" id="GO:0005509">
    <property type="term" value="F:calcium ion binding"/>
    <property type="evidence" value="ECO:0007669"/>
    <property type="project" value="TreeGrafter"/>
</dbReference>
<dbReference type="GO" id="GO:0140853">
    <property type="term" value="F:cholesterol-protein transferase activity"/>
    <property type="evidence" value="ECO:0000250"/>
    <property type="project" value="UniProtKB"/>
</dbReference>
<dbReference type="GO" id="GO:0016015">
    <property type="term" value="F:morphogen activity"/>
    <property type="evidence" value="ECO:0007669"/>
    <property type="project" value="UniProtKB-KW"/>
</dbReference>
<dbReference type="GO" id="GO:0005113">
    <property type="term" value="F:patched binding"/>
    <property type="evidence" value="ECO:0007669"/>
    <property type="project" value="EnsemblMetazoa"/>
</dbReference>
<dbReference type="GO" id="GO:0008233">
    <property type="term" value="F:peptidase activity"/>
    <property type="evidence" value="ECO:0000250"/>
    <property type="project" value="UniProtKB"/>
</dbReference>
<dbReference type="GO" id="GO:0001746">
    <property type="term" value="P:Bolwig's organ morphogenesis"/>
    <property type="evidence" value="ECO:0007669"/>
    <property type="project" value="EnsemblMetazoa"/>
</dbReference>
<dbReference type="GO" id="GO:0007267">
    <property type="term" value="P:cell-cell signaling"/>
    <property type="evidence" value="ECO:0007669"/>
    <property type="project" value="InterPro"/>
</dbReference>
<dbReference type="GO" id="GO:0035231">
    <property type="term" value="P:cytoneme assembly"/>
    <property type="evidence" value="ECO:0007669"/>
    <property type="project" value="EnsemblMetazoa"/>
</dbReference>
<dbReference type="GO" id="GO:0007427">
    <property type="term" value="P:epithelial cell migration, open tracheal system"/>
    <property type="evidence" value="ECO:0007669"/>
    <property type="project" value="EnsemblMetazoa"/>
</dbReference>
<dbReference type="GO" id="GO:0035224">
    <property type="term" value="P:genital disc anterior/posterior pattern formation"/>
    <property type="evidence" value="ECO:0007669"/>
    <property type="project" value="EnsemblMetazoa"/>
</dbReference>
<dbReference type="GO" id="GO:0008354">
    <property type="term" value="P:germ cell migration"/>
    <property type="evidence" value="ECO:0007669"/>
    <property type="project" value="EnsemblMetazoa"/>
</dbReference>
<dbReference type="GO" id="GO:0008347">
    <property type="term" value="P:glial cell migration"/>
    <property type="evidence" value="ECO:0007669"/>
    <property type="project" value="EnsemblMetazoa"/>
</dbReference>
<dbReference type="GO" id="GO:0007506">
    <property type="term" value="P:gonadal mesoderm development"/>
    <property type="evidence" value="ECO:0007669"/>
    <property type="project" value="EnsemblMetazoa"/>
</dbReference>
<dbReference type="GO" id="GO:0007442">
    <property type="term" value="P:hindgut morphogenesis"/>
    <property type="evidence" value="ECO:0007669"/>
    <property type="project" value="EnsemblMetazoa"/>
</dbReference>
<dbReference type="GO" id="GO:0007476">
    <property type="term" value="P:imaginal disc-derived wing morphogenesis"/>
    <property type="evidence" value="ECO:0007669"/>
    <property type="project" value="EnsemblMetazoa"/>
</dbReference>
<dbReference type="GO" id="GO:0016539">
    <property type="term" value="P:intein-mediated protein splicing"/>
    <property type="evidence" value="ECO:0007669"/>
    <property type="project" value="InterPro"/>
</dbReference>
<dbReference type="GO" id="GO:0035217">
    <property type="term" value="P:labial disc development"/>
    <property type="evidence" value="ECO:0007669"/>
    <property type="project" value="EnsemblMetazoa"/>
</dbReference>
<dbReference type="GO" id="GO:0016335">
    <property type="term" value="P:morphogenesis of larval imaginal disc epithelium"/>
    <property type="evidence" value="ECO:0007669"/>
    <property type="project" value="EnsemblMetazoa"/>
</dbReference>
<dbReference type="GO" id="GO:0002385">
    <property type="term" value="P:mucosal immune response"/>
    <property type="evidence" value="ECO:0007669"/>
    <property type="project" value="EnsemblMetazoa"/>
</dbReference>
<dbReference type="GO" id="GO:0034111">
    <property type="term" value="P:negative regulation of homotypic cell-cell adhesion"/>
    <property type="evidence" value="ECO:0007669"/>
    <property type="project" value="EnsemblMetazoa"/>
</dbReference>
<dbReference type="GO" id="GO:0045861">
    <property type="term" value="P:negative regulation of proteolysis"/>
    <property type="evidence" value="ECO:0007669"/>
    <property type="project" value="EnsemblMetazoa"/>
</dbReference>
<dbReference type="GO" id="GO:0002052">
    <property type="term" value="P:positive regulation of neuroblast proliferation"/>
    <property type="evidence" value="ECO:0007669"/>
    <property type="project" value="EnsemblMetazoa"/>
</dbReference>
<dbReference type="GO" id="GO:2000010">
    <property type="term" value="P:positive regulation of protein localization to cell surface"/>
    <property type="evidence" value="ECO:0007669"/>
    <property type="project" value="EnsemblMetazoa"/>
</dbReference>
<dbReference type="GO" id="GO:0007458">
    <property type="term" value="P:progression of morphogenetic furrow involved in compound eye morphogenesis"/>
    <property type="evidence" value="ECO:0007669"/>
    <property type="project" value="EnsemblMetazoa"/>
</dbReference>
<dbReference type="GO" id="GO:0016540">
    <property type="term" value="P:protein autoprocessing"/>
    <property type="evidence" value="ECO:0007669"/>
    <property type="project" value="EnsemblMetazoa"/>
</dbReference>
<dbReference type="GO" id="GO:2000495">
    <property type="term" value="P:regulation of cell proliferation involved in compound eye morphogenesis"/>
    <property type="evidence" value="ECO:0007669"/>
    <property type="project" value="EnsemblMetazoa"/>
</dbReference>
<dbReference type="GO" id="GO:2000274">
    <property type="term" value="P:regulation of epithelial cell migration, open tracheal system"/>
    <property type="evidence" value="ECO:0007669"/>
    <property type="project" value="EnsemblMetazoa"/>
</dbReference>
<dbReference type="GO" id="GO:0010468">
    <property type="term" value="P:regulation of gene expression"/>
    <property type="evidence" value="ECO:0007669"/>
    <property type="project" value="TreeGrafter"/>
</dbReference>
<dbReference type="GO" id="GO:0007346">
    <property type="term" value="P:regulation of mitotic cell cycle"/>
    <property type="evidence" value="ECO:0007669"/>
    <property type="project" value="EnsemblMetazoa"/>
</dbReference>
<dbReference type="GO" id="GO:0007367">
    <property type="term" value="P:segment polarity determination"/>
    <property type="evidence" value="ECO:0000250"/>
    <property type="project" value="UniProtKB"/>
</dbReference>
<dbReference type="GO" id="GO:0097264">
    <property type="term" value="P:self proteolysis"/>
    <property type="evidence" value="ECO:0000250"/>
    <property type="project" value="UniProtKB"/>
</dbReference>
<dbReference type="GO" id="GO:0007224">
    <property type="term" value="P:smoothened signaling pathway"/>
    <property type="evidence" value="ECO:0007669"/>
    <property type="project" value="EnsemblMetazoa"/>
</dbReference>
<dbReference type="GO" id="GO:0035277">
    <property type="term" value="P:spiracle morphogenesis, open tracheal system"/>
    <property type="evidence" value="ECO:0007669"/>
    <property type="project" value="EnsemblMetazoa"/>
</dbReference>
<dbReference type="GO" id="GO:0035154">
    <property type="term" value="P:terminal cell fate specification, open tracheal system"/>
    <property type="evidence" value="ECO:0007669"/>
    <property type="project" value="EnsemblMetazoa"/>
</dbReference>
<dbReference type="GO" id="GO:0007418">
    <property type="term" value="P:ventral midline development"/>
    <property type="evidence" value="ECO:0007669"/>
    <property type="project" value="EnsemblMetazoa"/>
</dbReference>
<dbReference type="GO" id="GO:0035222">
    <property type="term" value="P:wing disc pattern formation"/>
    <property type="evidence" value="ECO:0007669"/>
    <property type="project" value="EnsemblMetazoa"/>
</dbReference>
<dbReference type="CDD" id="cd00081">
    <property type="entry name" value="Hint"/>
    <property type="match status" value="1"/>
</dbReference>
<dbReference type="FunFam" id="2.170.16.10:FF:000001">
    <property type="entry name" value="Indian hedgehog"/>
    <property type="match status" value="1"/>
</dbReference>
<dbReference type="FunFam" id="3.30.1380.10:FF:000001">
    <property type="entry name" value="Indian hedgehog"/>
    <property type="match status" value="1"/>
</dbReference>
<dbReference type="Gene3D" id="3.30.1380.10">
    <property type="match status" value="1"/>
</dbReference>
<dbReference type="Gene3D" id="2.170.16.10">
    <property type="entry name" value="Hedgehog/Intein (Hint) domain"/>
    <property type="match status" value="1"/>
</dbReference>
<dbReference type="InterPro" id="IPR001657">
    <property type="entry name" value="Hedgehog"/>
</dbReference>
<dbReference type="InterPro" id="IPR001767">
    <property type="entry name" value="Hedgehog_Hint"/>
</dbReference>
<dbReference type="InterPro" id="IPR009045">
    <property type="entry name" value="Hedgehog_sig/DD-Pept_Zn-bd_sf"/>
</dbReference>
<dbReference type="InterPro" id="IPR050387">
    <property type="entry name" value="Hedgehog_Signaling"/>
</dbReference>
<dbReference type="InterPro" id="IPR000320">
    <property type="entry name" value="Hedgehog_signalling_dom"/>
</dbReference>
<dbReference type="InterPro" id="IPR003586">
    <property type="entry name" value="Hint_dom_C"/>
</dbReference>
<dbReference type="InterPro" id="IPR003587">
    <property type="entry name" value="Hint_dom_N"/>
</dbReference>
<dbReference type="InterPro" id="IPR036844">
    <property type="entry name" value="Hint_dom_sf"/>
</dbReference>
<dbReference type="InterPro" id="IPR006141">
    <property type="entry name" value="Intein_N"/>
</dbReference>
<dbReference type="PANTHER" id="PTHR11889">
    <property type="entry name" value="HEDGEHOG"/>
    <property type="match status" value="1"/>
</dbReference>
<dbReference type="PANTHER" id="PTHR11889:SF31">
    <property type="entry name" value="PROTEIN HEDGEHOG"/>
    <property type="match status" value="1"/>
</dbReference>
<dbReference type="Pfam" id="PF01085">
    <property type="entry name" value="HH_signal"/>
    <property type="match status" value="1"/>
</dbReference>
<dbReference type="Pfam" id="PF01079">
    <property type="entry name" value="Hint"/>
    <property type="match status" value="1"/>
</dbReference>
<dbReference type="PIRSF" id="PIRSF009400">
    <property type="entry name" value="Peptidase_C46"/>
    <property type="match status" value="1"/>
</dbReference>
<dbReference type="PRINTS" id="PR00632">
    <property type="entry name" value="SONICHHOG"/>
</dbReference>
<dbReference type="SMART" id="SM00305">
    <property type="entry name" value="HintC"/>
    <property type="match status" value="1"/>
</dbReference>
<dbReference type="SMART" id="SM00306">
    <property type="entry name" value="HintN"/>
    <property type="match status" value="1"/>
</dbReference>
<dbReference type="SUPFAM" id="SSF55166">
    <property type="entry name" value="Hedgehog/DD-peptidase"/>
    <property type="match status" value="1"/>
</dbReference>
<dbReference type="SUPFAM" id="SSF51294">
    <property type="entry name" value="Hedgehog/intein (Hint) domain"/>
    <property type="match status" value="1"/>
</dbReference>
<dbReference type="PROSITE" id="PS50817">
    <property type="entry name" value="INTEIN_N_TER"/>
    <property type="match status" value="1"/>
</dbReference>
<keyword id="KW-0068">Autocatalytic cleavage</keyword>
<keyword id="KW-0106">Calcium</keyword>
<keyword id="KW-1003">Cell membrane</keyword>
<keyword id="KW-0963">Cytoplasm</keyword>
<keyword id="KW-0217">Developmental protein</keyword>
<keyword id="KW-0378">Hydrolase</keyword>
<keyword id="KW-0449">Lipoprotein</keyword>
<keyword id="KW-0472">Membrane</keyword>
<keyword id="KW-0479">Metal-binding</keyword>
<keyword id="KW-0504">Morphogen</keyword>
<keyword id="KW-0539">Nucleus</keyword>
<keyword id="KW-0564">Palmitate</keyword>
<keyword id="KW-0645">Protease</keyword>
<keyword id="KW-0709">Segmentation polarity protein</keyword>
<keyword id="KW-0732">Signal</keyword>
<keyword id="KW-0808">Transferase</keyword>
<name>HH_DROYA</name>
<comment type="function">
    <molecule>Protein hedgehog</molecule>
    <text evidence="1 3">The C-terminal part of the hedgehog protein precursor displays an autoproteolysis activity that results in the cleavage of the full-length protein into two parts (N-product and C-product) (By similarity). In addition, the C-terminal part displays a cholesterol transferase activity that results by the covalent attachment of a cholesterol moiety to the C-terminal of the newly generated N-product (By similarity). Once cleaved, the C-product has no signaling activity and diffuses from the cell (By similarity).</text>
</comment>
<comment type="function">
    <molecule>Protein hedgehog N-product</molecule>
    <text evidence="1">The dually lipidated hedgehog protein N-product is a morphogen which is essential for a variety of patterning events during development. Establishes the anterior-posterior axis of the embryonic segments and patterns the larval imaginal disks. Binds to the patched (ptc) receptor, which functions in association with smoothened (smo), to activate the transcription of target genes wingless (wg), decapentaplegic (dpp) and ptc. In the absence of hh, ptc represses the constitutive signaling activity of smo through fused (fu). Essential component of a signaling pathway which regulates the Duox-dependent gut immune response to bacterial uracil; required to activate Cad99C-dependent endosome formation, norpA-dependent Ca2+ mobilization and p38 MAPK, which are essential steps in the Duox-dependent production of reactive oxygen species (ROS) in response to intestinal bacterial infection. During photoreceptor differentiation, it up-regulates transcription of Ubr3, which in turn promotes the hh-signaling pathway by mediating the ubiquitination and degradation of cos.</text>
</comment>
<comment type="catalytic activity">
    <molecule>Protein hedgehog</molecule>
    <reaction evidence="3">
        <text>glycyl-L-cysteinyl-[protein] + cholesterol + H(+) = [protein]-C-terminal glycyl cholesterol ester + N-terminal L-cysteinyl-[protein]</text>
        <dbReference type="Rhea" id="RHEA:59504"/>
        <dbReference type="Rhea" id="RHEA-COMP:12707"/>
        <dbReference type="Rhea" id="RHEA-COMP:15369"/>
        <dbReference type="Rhea" id="RHEA-COMP:15374"/>
        <dbReference type="ChEBI" id="CHEBI:15378"/>
        <dbReference type="ChEBI" id="CHEBI:16113"/>
        <dbReference type="ChEBI" id="CHEBI:65250"/>
        <dbReference type="ChEBI" id="CHEBI:143135"/>
        <dbReference type="ChEBI" id="CHEBI:143140"/>
    </reaction>
    <physiologicalReaction direction="left-to-right" evidence="3">
        <dbReference type="Rhea" id="RHEA:59505"/>
    </physiologicalReaction>
</comment>
<comment type="subunit">
    <text evidence="1">Interacts with shf.</text>
</comment>
<comment type="subcellular location">
    <subcellularLocation>
        <location evidence="1">Nucleus</location>
    </subcellularLocation>
    <subcellularLocation>
        <location evidence="1">Cytoplasm</location>
    </subcellularLocation>
    <text evidence="1">Nuclear up to embryonic stage 10 and then at stage 11 shifts to the cytoplasm. Also secreted in either cleaved or uncleaved form to mediate signaling to other cells.</text>
</comment>
<comment type="subcellular location">
    <molecule>Protein hedgehog N-product</molecule>
    <subcellularLocation>
        <location evidence="1">Cell membrane</location>
        <topology evidence="1">Lipid-anchor</topology>
    </subcellularLocation>
    <text evidence="1">The N-terminal peptide remains associated with the cell surface. Heparan sulfate proteoglycans of the extracellular matrix play an essential role in diffusion. Lipophorin is required for diffusion, probably by acting as vehicle for its movement, explaining how it can spread over long distances despite its lipidation.</text>
</comment>
<comment type="PTM">
    <molecule>Protein hedgehog</molecule>
    <text evidence="1 2 3">The C-terminal part of the hedgehog protein precursor displays an autoproteolysis activity that results in the cleavage of the full-length protein into two parts (N-product and C-product) (By similarity). In addition, the C-terminal part displays a cholesterol transferase activity that results by the covalent attachment of a cholesterol moiety to the C-terminal of the newly generated N-product (By similarity). The N-product is the active species in both local and long-range signaling, whereas the C-product has no signaling activity (By similarity).</text>
</comment>
<comment type="PTM">
    <molecule>Protein hedgehog N-product</molecule>
    <text evidence="3">Cholesterylation is required for N-product targeting to lipid rafts and multimerization.</text>
</comment>
<comment type="PTM">
    <molecule>Protein hedgehog N-product</molecule>
    <text evidence="1">N-palmitoylation by Rasp of the hedgehog N-product, within the secretory pathway, is required for the embryonic and larval patterning activities of the hedgehog signal.</text>
</comment>
<comment type="similarity">
    <text evidence="4">Belongs to the hedgehog family.</text>
</comment>
<organism>
    <name type="scientific">Drosophila yakuba</name>
    <name type="common">Fruit fly</name>
    <dbReference type="NCBI Taxonomy" id="7245"/>
    <lineage>
        <taxon>Eukaryota</taxon>
        <taxon>Metazoa</taxon>
        <taxon>Ecdysozoa</taxon>
        <taxon>Arthropoda</taxon>
        <taxon>Hexapoda</taxon>
        <taxon>Insecta</taxon>
        <taxon>Pterygota</taxon>
        <taxon>Neoptera</taxon>
        <taxon>Endopterygota</taxon>
        <taxon>Diptera</taxon>
        <taxon>Brachycera</taxon>
        <taxon>Muscomorpha</taxon>
        <taxon>Ephydroidea</taxon>
        <taxon>Drosophilidae</taxon>
        <taxon>Drosophila</taxon>
        <taxon>Sophophora</taxon>
    </lineage>
</organism>
<reference evidence="5" key="1">
    <citation type="journal article" date="2007" name="Nature">
        <title>Evolution of genes and genomes on the Drosophila phylogeny.</title>
        <authorList>
            <consortium name="Drosophila 12 genomes consortium"/>
        </authorList>
    </citation>
    <scope>NUCLEOTIDE SEQUENCE [LARGE SCALE GENOMIC DNA]</scope>
    <source>
        <strain evidence="5">Tai18E2 / Tucson 14021-0261.01</strain>
    </source>
</reference>
<evidence type="ECO:0000250" key="1">
    <source>
        <dbReference type="UniProtKB" id="Q02936"/>
    </source>
</evidence>
<evidence type="ECO:0000250" key="2">
    <source>
        <dbReference type="UniProtKB" id="Q15465"/>
    </source>
</evidence>
<evidence type="ECO:0000250" key="3">
    <source>
        <dbReference type="UniProtKB" id="Q62226"/>
    </source>
</evidence>
<evidence type="ECO:0000255" key="4"/>
<evidence type="ECO:0000312" key="5">
    <source>
        <dbReference type="EMBL" id="EDW98104.1"/>
    </source>
</evidence>
<sequence>MDNTSSVPWASAASVTCLSLDAKCHSSSAKSTASSISATPESQTMRHIAHTQRCLSRLTSLVALLLIVLPMNFSPAHSCGPGRGLGRHRARNLYPLVLKQTIPNLSEYTNSASGPLEGVIRRDSPKFKDLVPNYNRDILFRDEEGTGADRLMSKRCREKLNLLAYSVMNEWPGIRLLVTESWDEDYHHGQESLHYEGRAVTIATSDRDQSKYGMLARLAVEAGFDWVSYVSRRHIYCSVKSDSSISSHVHGCFTPESTALLESGVRKPLGELSIGDRVLSMTANGQAVYSEVILFMDRNLEQMQNFVQLHTDGGAVLTVTPAHLISVWQPESQKLTFVFADRIEEKNQVLVRDSETGELRPQRVIKVGSVRSKGVVAPLTREGTIVVNSVAASCYAVINSQSLAHWGLAPMRLLSTLEAWLPAKEQLHSSPKVVSSAEQQNGIHWYANALYKVKDYVLPQSWRHD</sequence>
<feature type="signal peptide" evidence="4">
    <location>
        <begin position="1"/>
        <end status="unknown"/>
    </location>
</feature>
<feature type="propeptide" id="PRO_0000383090" evidence="4">
    <location>
        <begin status="unknown"/>
        <end position="78"/>
    </location>
</feature>
<feature type="chain" id="PRO_0000383091" description="Protein hedgehog" evidence="1">
    <location>
        <begin position="79"/>
        <end position="465"/>
    </location>
</feature>
<feature type="chain" id="PRO_0000383092" description="Protein hedgehog N-product" evidence="1">
    <location>
        <begin position="79"/>
        <end position="251"/>
    </location>
</feature>
<feature type="binding site" evidence="2">
    <location>
        <position position="143"/>
    </location>
    <ligand>
        <name>Ca(2+)</name>
        <dbReference type="ChEBI" id="CHEBI:29108"/>
        <label>1</label>
    </ligand>
</feature>
<feature type="binding site" evidence="2">
    <location>
        <position position="144"/>
    </location>
    <ligand>
        <name>Ca(2+)</name>
        <dbReference type="ChEBI" id="CHEBI:29108"/>
        <label>1</label>
    </ligand>
</feature>
<feature type="binding site" evidence="2">
    <location>
        <position position="144"/>
    </location>
    <ligand>
        <name>Ca(2+)</name>
        <dbReference type="ChEBI" id="CHEBI:29108"/>
        <label>2</label>
    </ligand>
</feature>
<feature type="binding site" evidence="2">
    <location>
        <position position="149"/>
    </location>
    <ligand>
        <name>Ca(2+)</name>
        <dbReference type="ChEBI" id="CHEBI:29108"/>
        <label>1</label>
    </ligand>
</feature>
<feature type="binding site" evidence="2">
    <location>
        <position position="179"/>
    </location>
    <ligand>
        <name>Ca(2+)</name>
        <dbReference type="ChEBI" id="CHEBI:29108"/>
        <label>1</label>
    </ligand>
</feature>
<feature type="binding site" evidence="2">
    <location>
        <position position="180"/>
    </location>
    <ligand>
        <name>Ca(2+)</name>
        <dbReference type="ChEBI" id="CHEBI:29108"/>
        <label>1</label>
    </ligand>
</feature>
<feature type="binding site" evidence="2">
    <location>
        <position position="180"/>
    </location>
    <ligand>
        <name>Ca(2+)</name>
        <dbReference type="ChEBI" id="CHEBI:29108"/>
        <label>2</label>
    </ligand>
</feature>
<feature type="binding site" evidence="2">
    <location>
        <position position="183"/>
    </location>
    <ligand>
        <name>Ca(2+)</name>
        <dbReference type="ChEBI" id="CHEBI:29108"/>
        <label>2</label>
    </ligand>
</feature>
<feature type="binding site" evidence="2">
    <location>
        <position position="185"/>
    </location>
    <ligand>
        <name>Ca(2+)</name>
        <dbReference type="ChEBI" id="CHEBI:29108"/>
        <label>2</label>
    </ligand>
</feature>
<feature type="site" description="Cleavage; by autolysis" evidence="1">
    <location>
        <begin position="251"/>
        <end position="252"/>
    </location>
</feature>
<feature type="site" description="Involved in cholesterol transfer" evidence="1">
    <location>
        <position position="297"/>
    </location>
</feature>
<feature type="site" description="Involved in auto-cleavage" evidence="1">
    <location>
        <position position="320"/>
    </location>
</feature>
<feature type="site" description="Essential for auto-cleavage" evidence="1">
    <location>
        <position position="323"/>
    </location>
</feature>
<feature type="lipid moiety-binding region" description="N-palmitoyl cysteine" evidence="1">
    <location>
        <position position="79"/>
    </location>
</feature>
<feature type="lipid moiety-binding region" description="Cholesterol glycine ester" evidence="1">
    <location>
        <position position="251"/>
    </location>
</feature>
<gene>
    <name evidence="1" type="primary">hh</name>
    <name type="ORF">GE23980</name>
</gene>
<accession>B4PN49</accession>